<sequence>MEGPGLGSQCRNHSHGPHPPGFGRYGICAHENKELANAREALPLIEDSSNCDIVKATQYGIFERCKELVEAGYDVRQPDKENVSLLHWAAINNRLDLVKFYISKGAVVDQLGGDLNSTPLHWAIRQGHLPMVILLLQHGADPTLIDGEGFSSIHLAVLFQHMPIIAYLISKGQSVNMTDVNGQTPLMLSAHKVIGPEPTGFLLKFNPSLNVVDKIHQNTPLHWAVAAGNVNAVDKLLEAGSSLDIQNVKGETPLDMALQNKNQLIIHMLKTEAKMRANQKFRLWRWLQKCELFLLLMLSVITMWAVGYILDFNSDSWLLKGCLLVTLFFLTSLFPRFLVGYKNLVYLPTAFLLSSVFWIFMTWFILFFPDLAGAPFYFSFIFSIVAFLYFFYKTWATDPGFTKASEEEKKVNIITLAETGSLDFRTFCTSCLIRKPLRSLHCHVCNSCVARYDQHCLWTGRCIGFGNHHYYIFFLFFLSMVCGWIIYGSFIYWSSHCATTFKEDGLWTYLNQIVACSPWVLYILMLATFHFSWSTFLLLNQLFQIAFLGLTSHERISLQKQSKHMKQTLSLRKTPYNLGFMQNLADFFQCGCFGLVKPCVVDWTSQYTVVFHPAREKVLRSV</sequence>
<proteinExistence type="evidence at transcript level"/>
<organism>
    <name type="scientific">Pongo abelii</name>
    <name type="common">Sumatran orangutan</name>
    <name type="synonym">Pongo pygmaeus abelii</name>
    <dbReference type="NCBI Taxonomy" id="9601"/>
    <lineage>
        <taxon>Eukaryota</taxon>
        <taxon>Metazoa</taxon>
        <taxon>Chordata</taxon>
        <taxon>Craniata</taxon>
        <taxon>Vertebrata</taxon>
        <taxon>Euteleostomi</taxon>
        <taxon>Mammalia</taxon>
        <taxon>Eutheria</taxon>
        <taxon>Euarchontoglires</taxon>
        <taxon>Primates</taxon>
        <taxon>Haplorrhini</taxon>
        <taxon>Catarrhini</taxon>
        <taxon>Hominidae</taxon>
        <taxon>Pongo</taxon>
    </lineage>
</organism>
<evidence type="ECO:0000250" key="1">
    <source>
        <dbReference type="UniProtKB" id="Q8IUH4"/>
    </source>
</evidence>
<evidence type="ECO:0000250" key="2">
    <source>
        <dbReference type="UniProtKB" id="Q8IUH5"/>
    </source>
</evidence>
<evidence type="ECO:0000250" key="3">
    <source>
        <dbReference type="UniProtKB" id="Q9CWU2"/>
    </source>
</evidence>
<evidence type="ECO:0000255" key="4"/>
<evidence type="ECO:0000255" key="5">
    <source>
        <dbReference type="PROSITE-ProRule" id="PRU00067"/>
    </source>
</evidence>
<evidence type="ECO:0000305" key="6"/>
<dbReference type="EC" id="2.3.1.225" evidence="3"/>
<dbReference type="EMBL" id="CR926119">
    <property type="protein sequence ID" value="CAI29744.1"/>
    <property type="molecule type" value="mRNA"/>
</dbReference>
<dbReference type="RefSeq" id="NP_001127125.1">
    <property type="nucleotide sequence ID" value="NM_001133653.1"/>
</dbReference>
<dbReference type="RefSeq" id="XP_054379815.1">
    <property type="nucleotide sequence ID" value="XM_054523840.2"/>
</dbReference>
<dbReference type="SMR" id="Q5NVB9"/>
<dbReference type="FunCoup" id="Q5NVB9">
    <property type="interactions" value="1605"/>
</dbReference>
<dbReference type="STRING" id="9601.ENSPPYP00000003933"/>
<dbReference type="Ensembl" id="ENSPPYT00000004081.3">
    <property type="protein sequence ID" value="ENSPPYP00000003933.3"/>
    <property type="gene ID" value="ENSPPYG00000003426.3"/>
</dbReference>
<dbReference type="GeneID" id="100174171"/>
<dbReference type="KEGG" id="pon:100174171"/>
<dbReference type="CTD" id="54503"/>
<dbReference type="eggNOG" id="KOG0509">
    <property type="taxonomic scope" value="Eukaryota"/>
</dbReference>
<dbReference type="GeneTree" id="ENSGT00530000063074"/>
<dbReference type="InParanoid" id="Q5NVB9"/>
<dbReference type="OrthoDB" id="6781668at2759"/>
<dbReference type="Proteomes" id="UP000001595">
    <property type="component" value="Chromosome 11"/>
</dbReference>
<dbReference type="GO" id="GO:0005794">
    <property type="term" value="C:Golgi apparatus"/>
    <property type="evidence" value="ECO:0000250"/>
    <property type="project" value="UniProtKB"/>
</dbReference>
<dbReference type="GO" id="GO:0000139">
    <property type="term" value="C:Golgi membrane"/>
    <property type="evidence" value="ECO:0000250"/>
    <property type="project" value="UniProtKB"/>
</dbReference>
<dbReference type="GO" id="GO:0030660">
    <property type="term" value="C:Golgi-associated vesicle membrane"/>
    <property type="evidence" value="ECO:0000250"/>
    <property type="project" value="UniProtKB"/>
</dbReference>
<dbReference type="GO" id="GO:0015095">
    <property type="term" value="F:magnesium ion transmembrane transporter activity"/>
    <property type="evidence" value="ECO:0000250"/>
    <property type="project" value="UniProtKB"/>
</dbReference>
<dbReference type="GO" id="GO:0016409">
    <property type="term" value="F:palmitoyltransferase activity"/>
    <property type="evidence" value="ECO:0000250"/>
    <property type="project" value="UniProtKB"/>
</dbReference>
<dbReference type="GO" id="GO:0019706">
    <property type="term" value="F:protein-cysteine S-palmitoyltransferase activity"/>
    <property type="evidence" value="ECO:0007669"/>
    <property type="project" value="UniProtKB-EC"/>
</dbReference>
<dbReference type="FunFam" id="1.25.40.20:FF:000035">
    <property type="entry name" value="Palmitoyltransferase"/>
    <property type="match status" value="1"/>
</dbReference>
<dbReference type="Gene3D" id="1.25.40.20">
    <property type="entry name" value="Ankyrin repeat-containing domain"/>
    <property type="match status" value="1"/>
</dbReference>
<dbReference type="InterPro" id="IPR002110">
    <property type="entry name" value="Ankyrin_rpt"/>
</dbReference>
<dbReference type="InterPro" id="IPR036770">
    <property type="entry name" value="Ankyrin_rpt-contain_sf"/>
</dbReference>
<dbReference type="InterPro" id="IPR001594">
    <property type="entry name" value="Palmitoyltrfase_DHHC"/>
</dbReference>
<dbReference type="PANTHER" id="PTHR24161">
    <property type="entry name" value="ANK_REP_REGION DOMAIN-CONTAINING PROTEIN-RELATED"/>
    <property type="match status" value="1"/>
</dbReference>
<dbReference type="PANTHER" id="PTHR24161:SF16">
    <property type="entry name" value="PALMITOYLTRANSFERASE ZDHHC13"/>
    <property type="match status" value="1"/>
</dbReference>
<dbReference type="Pfam" id="PF12796">
    <property type="entry name" value="Ank_2"/>
    <property type="match status" value="2"/>
</dbReference>
<dbReference type="Pfam" id="PF01529">
    <property type="entry name" value="DHHC"/>
    <property type="match status" value="1"/>
</dbReference>
<dbReference type="SMART" id="SM00248">
    <property type="entry name" value="ANK"/>
    <property type="match status" value="6"/>
</dbReference>
<dbReference type="SUPFAM" id="SSF48403">
    <property type="entry name" value="Ankyrin repeat"/>
    <property type="match status" value="1"/>
</dbReference>
<dbReference type="PROSITE" id="PS50297">
    <property type="entry name" value="ANK_REP_REGION"/>
    <property type="match status" value="1"/>
</dbReference>
<dbReference type="PROSITE" id="PS50088">
    <property type="entry name" value="ANK_REPEAT"/>
    <property type="match status" value="4"/>
</dbReference>
<dbReference type="PROSITE" id="PS50216">
    <property type="entry name" value="DHHC"/>
    <property type="match status" value="1"/>
</dbReference>
<name>ZDH13_PONAB</name>
<feature type="chain" id="PRO_0000212890" description="Palmitoyltransferase ZDHHC13">
    <location>
        <begin position="1"/>
        <end position="622"/>
    </location>
</feature>
<feature type="topological domain" description="Cytoplasmic" evidence="6">
    <location>
        <begin position="1"/>
        <end position="291"/>
    </location>
</feature>
<feature type="transmembrane region" description="Helical" evidence="4">
    <location>
        <begin position="292"/>
        <end position="312"/>
    </location>
</feature>
<feature type="topological domain" description="Lumenal" evidence="6">
    <location>
        <begin position="313"/>
        <end position="320"/>
    </location>
</feature>
<feature type="transmembrane region" description="Helical" evidence="4">
    <location>
        <begin position="321"/>
        <end position="341"/>
    </location>
</feature>
<feature type="topological domain" description="Cytoplasmic" evidence="6">
    <location>
        <begin position="342"/>
        <end position="347"/>
    </location>
</feature>
<feature type="transmembrane region" description="Helical" evidence="4">
    <location>
        <begin position="348"/>
        <end position="368"/>
    </location>
</feature>
<feature type="topological domain" description="Lumenal" evidence="6">
    <location>
        <begin position="369"/>
        <end position="370"/>
    </location>
</feature>
<feature type="transmembrane region" description="Helical" evidence="4">
    <location>
        <begin position="371"/>
        <end position="391"/>
    </location>
</feature>
<feature type="topological domain" description="Cytoplasmic" evidence="6">
    <location>
        <begin position="392"/>
        <end position="470"/>
    </location>
</feature>
<feature type="transmembrane region" description="Helical" evidence="4">
    <location>
        <begin position="471"/>
        <end position="491"/>
    </location>
</feature>
<feature type="topological domain" description="Lumenal" evidence="6">
    <location>
        <begin position="492"/>
        <end position="518"/>
    </location>
</feature>
<feature type="transmembrane region" description="Helical" evidence="4">
    <location>
        <begin position="519"/>
        <end position="539"/>
    </location>
</feature>
<feature type="topological domain" description="Cytoplasmic" evidence="6">
    <location>
        <begin position="540"/>
        <end position="622"/>
    </location>
</feature>
<feature type="repeat" description="ANK 1" evidence="2">
    <location>
        <begin position="43"/>
        <end position="78"/>
    </location>
</feature>
<feature type="repeat" description="ANK 2" evidence="4">
    <location>
        <begin position="81"/>
        <end position="110"/>
    </location>
</feature>
<feature type="repeat" description="ANK 3" evidence="4">
    <location>
        <begin position="115"/>
        <end position="144"/>
    </location>
</feature>
<feature type="repeat" description="ANK 4" evidence="4">
    <location>
        <begin position="148"/>
        <end position="177"/>
    </location>
</feature>
<feature type="repeat" description="ANK 5" evidence="4">
    <location>
        <begin position="181"/>
        <end position="211"/>
    </location>
</feature>
<feature type="repeat" description="ANK 6" evidence="4">
    <location>
        <begin position="216"/>
        <end position="245"/>
    </location>
</feature>
<feature type="repeat" description="ANK 7" evidence="4">
    <location>
        <begin position="249"/>
        <end position="277"/>
    </location>
</feature>
<feature type="domain" description="DHHC" evidence="5">
    <location>
        <begin position="426"/>
        <end position="476"/>
    </location>
</feature>
<feature type="active site" description="S-palmitoyl cysteine intermediate" evidence="5">
    <location>
        <position position="456"/>
    </location>
</feature>
<feature type="modified residue" description="N-acetylmethionine" evidence="1">
    <location>
        <position position="1"/>
    </location>
</feature>
<reference key="1">
    <citation type="submission" date="2004-11" db="EMBL/GenBank/DDBJ databases">
        <authorList>
            <consortium name="The German cDNA consortium"/>
        </authorList>
    </citation>
    <scope>NUCLEOTIDE SEQUENCE [LARGE SCALE MRNA]</scope>
    <source>
        <tissue>Brain cortex</tissue>
    </source>
</reference>
<accession>Q5NVB9</accession>
<comment type="function">
    <text evidence="3">Palmitoyltransferase that could catalyze the addition of palmitate onto various protein substrates. Palmitoyltransferase for HTT and GAD2. May play a role in Mg(2+) transport.</text>
</comment>
<comment type="catalytic activity">
    <reaction evidence="3">
        <text>L-cysteinyl-[protein] + hexadecanoyl-CoA = S-hexadecanoyl-L-cysteinyl-[protein] + CoA</text>
        <dbReference type="Rhea" id="RHEA:36683"/>
        <dbReference type="Rhea" id="RHEA-COMP:10131"/>
        <dbReference type="Rhea" id="RHEA-COMP:11032"/>
        <dbReference type="ChEBI" id="CHEBI:29950"/>
        <dbReference type="ChEBI" id="CHEBI:57287"/>
        <dbReference type="ChEBI" id="CHEBI:57379"/>
        <dbReference type="ChEBI" id="CHEBI:74151"/>
        <dbReference type="EC" id="2.3.1.225"/>
    </reaction>
    <physiologicalReaction direction="left-to-right" evidence="3">
        <dbReference type="Rhea" id="RHEA:36684"/>
    </physiologicalReaction>
</comment>
<comment type="subunit">
    <text evidence="3">Interacts (via ANK repeats) with CLIP3. Interacts (via ANK repeats) with DNAJC5 (via C-terminus). Interacts (via ANK repeats) with HTT. Interacts (via ANK repeats) with MAP6. Interacts (via ANK repeats) with SNAP23. Interacts (via ANK repeats) with SNAP25. May interact (via ANK repeats) with SPRED2.</text>
</comment>
<comment type="subcellular location">
    <subcellularLocation>
        <location evidence="3">Golgi apparatus membrane</location>
        <topology evidence="4">Multi-pass membrane protein</topology>
    </subcellularLocation>
    <subcellularLocation>
        <location evidence="3">Cytoplasmic vesicle membrane</location>
        <topology evidence="4">Multi-pass membrane protein</topology>
    </subcellularLocation>
    <text evidence="3">Low extracellular Mg(2+) induces increase in Golgi and in post-Golgi vesicles.</text>
</comment>
<comment type="domain">
    <text evidence="2">The DHHC domain is required for palmitoyltransferase activity.</text>
</comment>
<comment type="similarity">
    <text evidence="6">Belongs to the DHHC palmitoyltransferase family. AKR/ZDHHC17 subfamily.</text>
</comment>
<gene>
    <name evidence="1" type="primary">ZDHHC13</name>
</gene>
<protein>
    <recommendedName>
        <fullName evidence="6">Palmitoyltransferase ZDHHC13</fullName>
        <ecNumber evidence="3">2.3.1.225</ecNumber>
    </recommendedName>
    <alternativeName>
        <fullName evidence="1">Zinc finger DHHC domain-containing protein 13</fullName>
        <shortName evidence="3">DHHC-13</shortName>
    </alternativeName>
</protein>
<keyword id="KW-0007">Acetylation</keyword>
<keyword id="KW-0012">Acyltransferase</keyword>
<keyword id="KW-0040">ANK repeat</keyword>
<keyword id="KW-0968">Cytoplasmic vesicle</keyword>
<keyword id="KW-0333">Golgi apparatus</keyword>
<keyword id="KW-0449">Lipoprotein</keyword>
<keyword id="KW-0472">Membrane</keyword>
<keyword id="KW-0564">Palmitate</keyword>
<keyword id="KW-1185">Reference proteome</keyword>
<keyword id="KW-0677">Repeat</keyword>
<keyword id="KW-0808">Transferase</keyword>
<keyword id="KW-0812">Transmembrane</keyword>
<keyword id="KW-1133">Transmembrane helix</keyword>